<comment type="function">
    <text evidence="1">The glycine cleavage system catalyzes the degradation of glycine.</text>
</comment>
<comment type="catalytic activity">
    <reaction evidence="1">
        <text>N(6)-[(R)-S(8)-aminomethyldihydrolipoyl]-L-lysyl-[protein] + (6S)-5,6,7,8-tetrahydrofolate = N(6)-[(R)-dihydrolipoyl]-L-lysyl-[protein] + (6R)-5,10-methylene-5,6,7,8-tetrahydrofolate + NH4(+)</text>
        <dbReference type="Rhea" id="RHEA:16945"/>
        <dbReference type="Rhea" id="RHEA-COMP:10475"/>
        <dbReference type="Rhea" id="RHEA-COMP:10492"/>
        <dbReference type="ChEBI" id="CHEBI:15636"/>
        <dbReference type="ChEBI" id="CHEBI:28938"/>
        <dbReference type="ChEBI" id="CHEBI:57453"/>
        <dbReference type="ChEBI" id="CHEBI:83100"/>
        <dbReference type="ChEBI" id="CHEBI:83143"/>
        <dbReference type="EC" id="2.1.2.10"/>
    </reaction>
</comment>
<comment type="subunit">
    <text evidence="1">The glycine cleavage system is composed of four proteins: P, T, L and H.</text>
</comment>
<comment type="similarity">
    <text evidence="1">Belongs to the GcvT family.</text>
</comment>
<name>GCST_ECO27</name>
<gene>
    <name evidence="1" type="primary">gcvT</name>
    <name type="ordered locus">E2348C_3157</name>
</gene>
<protein>
    <recommendedName>
        <fullName evidence="1">Aminomethyltransferase</fullName>
        <ecNumber evidence="1">2.1.2.10</ecNumber>
    </recommendedName>
    <alternativeName>
        <fullName evidence="1">Glycine cleavage system T protein</fullName>
    </alternativeName>
</protein>
<feature type="chain" id="PRO_1000125637" description="Aminomethyltransferase">
    <location>
        <begin position="1"/>
        <end position="364"/>
    </location>
</feature>
<proteinExistence type="inferred from homology"/>
<keyword id="KW-0032">Aminotransferase</keyword>
<keyword id="KW-1185">Reference proteome</keyword>
<keyword id="KW-0808">Transferase</keyword>
<dbReference type="EC" id="2.1.2.10" evidence="1"/>
<dbReference type="EMBL" id="FM180568">
    <property type="protein sequence ID" value="CAS10705.1"/>
    <property type="molecule type" value="Genomic_DNA"/>
</dbReference>
<dbReference type="RefSeq" id="WP_000068706.1">
    <property type="nucleotide sequence ID" value="NC_011601.1"/>
</dbReference>
<dbReference type="SMR" id="B7UHV3"/>
<dbReference type="GeneID" id="75173005"/>
<dbReference type="KEGG" id="ecg:E2348C_3157"/>
<dbReference type="HOGENOM" id="CLU_007884_10_2_6"/>
<dbReference type="Proteomes" id="UP000008205">
    <property type="component" value="Chromosome"/>
</dbReference>
<dbReference type="GO" id="GO:0005829">
    <property type="term" value="C:cytosol"/>
    <property type="evidence" value="ECO:0007669"/>
    <property type="project" value="TreeGrafter"/>
</dbReference>
<dbReference type="GO" id="GO:0005960">
    <property type="term" value="C:glycine cleavage complex"/>
    <property type="evidence" value="ECO:0007669"/>
    <property type="project" value="InterPro"/>
</dbReference>
<dbReference type="GO" id="GO:0004047">
    <property type="term" value="F:aminomethyltransferase activity"/>
    <property type="evidence" value="ECO:0007669"/>
    <property type="project" value="UniProtKB-UniRule"/>
</dbReference>
<dbReference type="GO" id="GO:0008483">
    <property type="term" value="F:transaminase activity"/>
    <property type="evidence" value="ECO:0007669"/>
    <property type="project" value="UniProtKB-KW"/>
</dbReference>
<dbReference type="GO" id="GO:0019464">
    <property type="term" value="P:glycine decarboxylation via glycine cleavage system"/>
    <property type="evidence" value="ECO:0007669"/>
    <property type="project" value="UniProtKB-UniRule"/>
</dbReference>
<dbReference type="FunFam" id="2.40.30.110:FF:000001">
    <property type="entry name" value="Aminomethyltransferase"/>
    <property type="match status" value="1"/>
</dbReference>
<dbReference type="FunFam" id="3.30.70.1400:FF:000001">
    <property type="entry name" value="Aminomethyltransferase"/>
    <property type="match status" value="1"/>
</dbReference>
<dbReference type="FunFam" id="4.10.1250.10:FF:000001">
    <property type="entry name" value="Aminomethyltransferase"/>
    <property type="match status" value="1"/>
</dbReference>
<dbReference type="Gene3D" id="2.40.30.110">
    <property type="entry name" value="Aminomethyltransferase beta-barrel domains"/>
    <property type="match status" value="1"/>
</dbReference>
<dbReference type="Gene3D" id="3.30.70.1400">
    <property type="entry name" value="Aminomethyltransferase beta-barrel domains"/>
    <property type="match status" value="1"/>
</dbReference>
<dbReference type="Gene3D" id="4.10.1250.10">
    <property type="entry name" value="Aminomethyltransferase fragment"/>
    <property type="match status" value="1"/>
</dbReference>
<dbReference type="Gene3D" id="3.30.1360.120">
    <property type="entry name" value="Probable tRNA modification gtpase trme, domain 1"/>
    <property type="match status" value="1"/>
</dbReference>
<dbReference type="HAMAP" id="MF_00259">
    <property type="entry name" value="GcvT"/>
    <property type="match status" value="1"/>
</dbReference>
<dbReference type="InterPro" id="IPR006223">
    <property type="entry name" value="GCS_T"/>
</dbReference>
<dbReference type="InterPro" id="IPR022903">
    <property type="entry name" value="GCS_T_bac"/>
</dbReference>
<dbReference type="InterPro" id="IPR013977">
    <property type="entry name" value="GCST_C"/>
</dbReference>
<dbReference type="InterPro" id="IPR006222">
    <property type="entry name" value="GCV_T_N"/>
</dbReference>
<dbReference type="InterPro" id="IPR028896">
    <property type="entry name" value="GcvT/YgfZ/DmdA"/>
</dbReference>
<dbReference type="InterPro" id="IPR029043">
    <property type="entry name" value="GcvT/YgfZ_C"/>
</dbReference>
<dbReference type="InterPro" id="IPR027266">
    <property type="entry name" value="TrmE/GcvT_dom1"/>
</dbReference>
<dbReference type="NCBIfam" id="TIGR00528">
    <property type="entry name" value="gcvT"/>
    <property type="match status" value="1"/>
</dbReference>
<dbReference type="NCBIfam" id="NF001567">
    <property type="entry name" value="PRK00389.1"/>
    <property type="match status" value="1"/>
</dbReference>
<dbReference type="PANTHER" id="PTHR43757">
    <property type="entry name" value="AMINOMETHYLTRANSFERASE"/>
    <property type="match status" value="1"/>
</dbReference>
<dbReference type="PANTHER" id="PTHR43757:SF2">
    <property type="entry name" value="AMINOMETHYLTRANSFERASE, MITOCHONDRIAL"/>
    <property type="match status" value="1"/>
</dbReference>
<dbReference type="Pfam" id="PF01571">
    <property type="entry name" value="GCV_T"/>
    <property type="match status" value="1"/>
</dbReference>
<dbReference type="Pfam" id="PF08669">
    <property type="entry name" value="GCV_T_C"/>
    <property type="match status" value="1"/>
</dbReference>
<dbReference type="PIRSF" id="PIRSF006487">
    <property type="entry name" value="GcvT"/>
    <property type="match status" value="1"/>
</dbReference>
<dbReference type="SUPFAM" id="SSF101790">
    <property type="entry name" value="Aminomethyltransferase beta-barrel domain"/>
    <property type="match status" value="1"/>
</dbReference>
<dbReference type="SUPFAM" id="SSF103025">
    <property type="entry name" value="Folate-binding domain"/>
    <property type="match status" value="1"/>
</dbReference>
<accession>B7UHV3</accession>
<organism>
    <name type="scientific">Escherichia coli O127:H6 (strain E2348/69 / EPEC)</name>
    <dbReference type="NCBI Taxonomy" id="574521"/>
    <lineage>
        <taxon>Bacteria</taxon>
        <taxon>Pseudomonadati</taxon>
        <taxon>Pseudomonadota</taxon>
        <taxon>Gammaproteobacteria</taxon>
        <taxon>Enterobacterales</taxon>
        <taxon>Enterobacteriaceae</taxon>
        <taxon>Escherichia</taxon>
    </lineage>
</organism>
<sequence>MAQQTPLYEQHTLCGARMVDFHGWMMPLHYGSQIDEHHAVRTDAGMFDVSHMTIVDLRGSRTREFLRYLLANDVAKLTKSGKALYSGMLNASGGVIDDLIVYYFTEDFFRLVVNSATREKDLSWITQHAEPFGIEITVRDDLSMIAVQGPNAQAKAATLFNDAQRQAVEGMKPFFGVQAGDLFIATTGYTGEAGYEIALPNEKAADFWRALVEAGVKPCGLGARDTLRLEAGMNLYSQEMDETISPLAANMGWTIAWEPADRDFIGREALEAQREHGTEKLVGLVMTEKGVLRNELPVRFTDAQGNQHEGIITSGTFSPTLGYSIALARVPEGIGETAIVQIRNREMPVKVTKPVFVRNGKAVA</sequence>
<evidence type="ECO:0000255" key="1">
    <source>
        <dbReference type="HAMAP-Rule" id="MF_00259"/>
    </source>
</evidence>
<reference key="1">
    <citation type="journal article" date="2009" name="J. Bacteriol.">
        <title>Complete genome sequence and comparative genome analysis of enteropathogenic Escherichia coli O127:H6 strain E2348/69.</title>
        <authorList>
            <person name="Iguchi A."/>
            <person name="Thomson N.R."/>
            <person name="Ogura Y."/>
            <person name="Saunders D."/>
            <person name="Ooka T."/>
            <person name="Henderson I.R."/>
            <person name="Harris D."/>
            <person name="Asadulghani M."/>
            <person name="Kurokawa K."/>
            <person name="Dean P."/>
            <person name="Kenny B."/>
            <person name="Quail M.A."/>
            <person name="Thurston S."/>
            <person name="Dougan G."/>
            <person name="Hayashi T."/>
            <person name="Parkhill J."/>
            <person name="Frankel G."/>
        </authorList>
    </citation>
    <scope>NUCLEOTIDE SEQUENCE [LARGE SCALE GENOMIC DNA]</scope>
    <source>
        <strain>E2348/69 / EPEC</strain>
    </source>
</reference>